<dbReference type="EC" id="4.1.2.40" evidence="1"/>
<dbReference type="EMBL" id="AE007317">
    <property type="protein sequence ID" value="AAK99876.1"/>
    <property type="molecule type" value="Genomic_DNA"/>
</dbReference>
<dbReference type="PIR" id="H98005">
    <property type="entry name" value="H98005"/>
</dbReference>
<dbReference type="RefSeq" id="NP_358666.1">
    <property type="nucleotide sequence ID" value="NC_003098.1"/>
</dbReference>
<dbReference type="RefSeq" id="WP_001229135.1">
    <property type="nucleotide sequence ID" value="NC_003098.1"/>
</dbReference>
<dbReference type="SMR" id="Q8DPP2"/>
<dbReference type="STRING" id="171101.spr1073"/>
<dbReference type="KEGG" id="spr:spr1073"/>
<dbReference type="PATRIC" id="fig|171101.6.peg.1165"/>
<dbReference type="eggNOG" id="COG3684">
    <property type="taxonomic scope" value="Bacteria"/>
</dbReference>
<dbReference type="HOGENOM" id="CLU_058971_0_1_9"/>
<dbReference type="UniPathway" id="UPA00704">
    <property type="reaction ID" value="UER00716"/>
</dbReference>
<dbReference type="Proteomes" id="UP000000586">
    <property type="component" value="Chromosome"/>
</dbReference>
<dbReference type="GO" id="GO:0061595">
    <property type="term" value="F:6-deoxy-6-sulfofructose-1-phosphate aldolase activity"/>
    <property type="evidence" value="ECO:0000318"/>
    <property type="project" value="GO_Central"/>
</dbReference>
<dbReference type="GO" id="GO:0009024">
    <property type="term" value="F:tagatose-6-phosphate kinase activity"/>
    <property type="evidence" value="ECO:0007669"/>
    <property type="project" value="InterPro"/>
</dbReference>
<dbReference type="GO" id="GO:0009025">
    <property type="term" value="F:tagatose-bisphosphate aldolase activity"/>
    <property type="evidence" value="ECO:0007669"/>
    <property type="project" value="UniProtKB-UniRule"/>
</dbReference>
<dbReference type="GO" id="GO:1902777">
    <property type="term" value="P:6-sulfoquinovose(1-) catabolic process"/>
    <property type="evidence" value="ECO:0000318"/>
    <property type="project" value="GO_Central"/>
</dbReference>
<dbReference type="GO" id="GO:2001059">
    <property type="term" value="P:D-tagatose 6-phosphate catabolic process"/>
    <property type="evidence" value="ECO:0007669"/>
    <property type="project" value="UniProtKB-UniRule"/>
</dbReference>
<dbReference type="GO" id="GO:0019512">
    <property type="term" value="P:lactose catabolic process via tagatose-6-phosphate"/>
    <property type="evidence" value="ECO:0007669"/>
    <property type="project" value="InterPro"/>
</dbReference>
<dbReference type="FunFam" id="3.20.20.70:FF:000137">
    <property type="entry name" value="Tagatose 1,6-diphosphate aldolase 2"/>
    <property type="match status" value="1"/>
</dbReference>
<dbReference type="Gene3D" id="3.20.20.70">
    <property type="entry name" value="Aldolase class I"/>
    <property type="match status" value="1"/>
</dbReference>
<dbReference type="HAMAP" id="MF_00734">
    <property type="entry name" value="LacD"/>
    <property type="match status" value="1"/>
</dbReference>
<dbReference type="InterPro" id="IPR013785">
    <property type="entry name" value="Aldolase_TIM"/>
</dbReference>
<dbReference type="InterPro" id="IPR002915">
    <property type="entry name" value="DeoC/FbaB/LacD_aldolase"/>
</dbReference>
<dbReference type="InterPro" id="IPR050552">
    <property type="entry name" value="LacD_aldolase"/>
</dbReference>
<dbReference type="InterPro" id="IPR005927">
    <property type="entry name" value="Tag_1.6-dipho_adolase"/>
</dbReference>
<dbReference type="NCBIfam" id="TIGR01232">
    <property type="entry name" value="lacD"/>
    <property type="match status" value="1"/>
</dbReference>
<dbReference type="NCBIfam" id="NF003180">
    <property type="entry name" value="PRK04161.1"/>
    <property type="match status" value="1"/>
</dbReference>
<dbReference type="NCBIfam" id="NF009065">
    <property type="entry name" value="PRK12399.1"/>
    <property type="match status" value="1"/>
</dbReference>
<dbReference type="NCBIfam" id="NF009498">
    <property type="entry name" value="PRK12858.1"/>
    <property type="match status" value="1"/>
</dbReference>
<dbReference type="PANTHER" id="PTHR39340">
    <property type="entry name" value="SULFOFRUCTOSEPHOSPHATE ALDOLASE"/>
    <property type="match status" value="1"/>
</dbReference>
<dbReference type="PANTHER" id="PTHR39340:SF1">
    <property type="entry name" value="SULFOFRUCTOSEPHOSPHATE ALDOLASE"/>
    <property type="match status" value="1"/>
</dbReference>
<dbReference type="Pfam" id="PF01791">
    <property type="entry name" value="DeoC"/>
    <property type="match status" value="1"/>
</dbReference>
<dbReference type="SMART" id="SM01133">
    <property type="entry name" value="DeoC"/>
    <property type="match status" value="1"/>
</dbReference>
<dbReference type="SUPFAM" id="SSF51569">
    <property type="entry name" value="Aldolase"/>
    <property type="match status" value="1"/>
</dbReference>
<reference key="1">
    <citation type="journal article" date="2001" name="J. Bacteriol.">
        <title>Genome of the bacterium Streptococcus pneumoniae strain R6.</title>
        <authorList>
            <person name="Hoskins J."/>
            <person name="Alborn W.E. Jr."/>
            <person name="Arnold J."/>
            <person name="Blaszczak L.C."/>
            <person name="Burgett S."/>
            <person name="DeHoff B.S."/>
            <person name="Estrem S.T."/>
            <person name="Fritz L."/>
            <person name="Fu D.-J."/>
            <person name="Fuller W."/>
            <person name="Geringer C."/>
            <person name="Gilmour R."/>
            <person name="Glass J.S."/>
            <person name="Khoja H."/>
            <person name="Kraft A.R."/>
            <person name="Lagace R.E."/>
            <person name="LeBlanc D.J."/>
            <person name="Lee L.N."/>
            <person name="Lefkowitz E.J."/>
            <person name="Lu J."/>
            <person name="Matsushima P."/>
            <person name="McAhren S.M."/>
            <person name="McHenney M."/>
            <person name="McLeaster K."/>
            <person name="Mundy C.W."/>
            <person name="Nicas T.I."/>
            <person name="Norris F.H."/>
            <person name="O'Gara M."/>
            <person name="Peery R.B."/>
            <person name="Robertson G.T."/>
            <person name="Rockey P."/>
            <person name="Sun P.-M."/>
            <person name="Winkler M.E."/>
            <person name="Yang Y."/>
            <person name="Young-Bellido M."/>
            <person name="Zhao G."/>
            <person name="Zook C.A."/>
            <person name="Baltz R.H."/>
            <person name="Jaskunas S.R."/>
            <person name="Rosteck P.R. Jr."/>
            <person name="Skatrud P.L."/>
            <person name="Glass J.I."/>
        </authorList>
    </citation>
    <scope>NUCLEOTIDE SEQUENCE [LARGE SCALE GENOMIC DNA]</scope>
    <source>
        <strain>ATCC BAA-255 / R6</strain>
    </source>
</reference>
<sequence>MALTEQKRVRLEKLSDENGIISALAFDQRGALKRLMAQHQTEEPTVAQMEELKVLVADELTKYASSMLLDPEYGLPATKALDEKAGLLLAYEKTGYDTTSTKRLPDCLDVWSAKRIKEEGADAVKFLLYYDVDSSDELNQEKQAYIERIGSECVAEDIPFFLEILAYDEKIADAGSVEYAKVKPHKVIGAMKVFSDPRFNIDVLKVEVPVNIKYVEGFAEGEVVYTREEAAAFFKAQDEATNFPYIYLSAGVSAKLFQDTLVFAHESGANFNGVLCGRATWAGSVEAYIKDGEAAAREWLRTTGFENIDELNKVLQTTATSWKERV</sequence>
<keyword id="KW-0423">Lactose metabolism</keyword>
<keyword id="KW-0456">Lyase</keyword>
<keyword id="KW-1185">Reference proteome</keyword>
<organism>
    <name type="scientific">Streptococcus pneumoniae (strain ATCC BAA-255 / R6)</name>
    <dbReference type="NCBI Taxonomy" id="171101"/>
    <lineage>
        <taxon>Bacteria</taxon>
        <taxon>Bacillati</taxon>
        <taxon>Bacillota</taxon>
        <taxon>Bacilli</taxon>
        <taxon>Lactobacillales</taxon>
        <taxon>Streptococcaceae</taxon>
        <taxon>Streptococcus</taxon>
    </lineage>
</organism>
<proteinExistence type="inferred from homology"/>
<gene>
    <name evidence="1" type="primary">lacD</name>
    <name type="ordered locus">spr1073</name>
</gene>
<evidence type="ECO:0000255" key="1">
    <source>
        <dbReference type="HAMAP-Rule" id="MF_00734"/>
    </source>
</evidence>
<name>LACD_STRR6</name>
<feature type="chain" id="PRO_0000203960" description="Tagatose 1,6-diphosphate aldolase">
    <location>
        <begin position="1"/>
        <end position="326"/>
    </location>
</feature>
<protein>
    <recommendedName>
        <fullName evidence="1">Tagatose 1,6-diphosphate aldolase</fullName>
        <ecNumber evidence="1">4.1.2.40</ecNumber>
    </recommendedName>
    <alternativeName>
        <fullName evidence="1">D-tagatose-1,6-bisphosphate aldolase</fullName>
    </alternativeName>
    <alternativeName>
        <fullName evidence="1">Tagatose-bisphosphate aldolase</fullName>
    </alternativeName>
</protein>
<accession>Q8DPP2</accession>
<comment type="catalytic activity">
    <reaction evidence="1">
        <text>D-tagatofuranose 1,6-bisphosphate = D-glyceraldehyde 3-phosphate + dihydroxyacetone phosphate</text>
        <dbReference type="Rhea" id="RHEA:22948"/>
        <dbReference type="ChEBI" id="CHEBI:57642"/>
        <dbReference type="ChEBI" id="CHEBI:58694"/>
        <dbReference type="ChEBI" id="CHEBI:59776"/>
        <dbReference type="EC" id="4.1.2.40"/>
    </reaction>
</comment>
<comment type="pathway">
    <text evidence="1">Carbohydrate metabolism; D-tagatose 6-phosphate degradation; D-glyceraldehyde 3-phosphate and glycerone phosphate from D-tagatose 6-phosphate: step 2/2.</text>
</comment>
<comment type="similarity">
    <text evidence="1">Belongs to the aldolase LacD family.</text>
</comment>